<sequence length="539" mass="58057">MPKLLRFDEEARRSLEKGVNKVADAVRITLGPKGRNVVIEKSWGSPTITNDGVSIAKEIELEDKFENLGAQLVKEVASKTNDVAGDGTTTATVLAQSMIREGLKNVAAGSNPILLKRGIDKATEKAAKYIKDKAKKLSGREDIAHVAAISANSSEIGDLIAEAMDKVGEDGVITVEDSKTLETYVEFTEGMQFDRGYISPYFVTDAEKMEVELKEPFILITDKKLSAVKPLIPVLEKVAQTGKPILVIAEDVEGEALTTLVLNKLKGTLSACAVKAPGFGDRRKAMLQDIAILTGGTVISDELGINLEDVAIEDLGRADIVRVKKDDTIIIGGKGNPEEIKKRIAQIKSQIEQTTSEYEKETLQERMAKLAGGVAVIKVGAATETELKEKKHRIEDALSATRAAVEEGIVPGGGVTLIRSRKAVEDVLKELDGDEKVGAMIVYKALEAPIRQIAENAGYDGAVIIEKILASKEESYGFDALKGEYTDMFKAGIIDPAKVTRSALQNAASIAGMLLTTEVLVVEKPEEKKEAAPAMPPEY</sequence>
<feature type="chain" id="PRO_1000061260" description="Chaperonin GroEL">
    <location>
        <begin position="1"/>
        <end position="539"/>
    </location>
</feature>
<feature type="binding site" evidence="1">
    <location>
        <begin position="29"/>
        <end position="32"/>
    </location>
    <ligand>
        <name>ATP</name>
        <dbReference type="ChEBI" id="CHEBI:30616"/>
    </ligand>
</feature>
<feature type="binding site" evidence="1">
    <location>
        <begin position="86"/>
        <end position="90"/>
    </location>
    <ligand>
        <name>ATP</name>
        <dbReference type="ChEBI" id="CHEBI:30616"/>
    </ligand>
</feature>
<feature type="binding site" evidence="1">
    <location>
        <position position="413"/>
    </location>
    <ligand>
        <name>ATP</name>
        <dbReference type="ChEBI" id="CHEBI:30616"/>
    </ligand>
</feature>
<feature type="binding site" evidence="1">
    <location>
        <begin position="479"/>
        <end position="481"/>
    </location>
    <ligand>
        <name>ATP</name>
        <dbReference type="ChEBI" id="CHEBI:30616"/>
    </ligand>
</feature>
<feature type="binding site" evidence="1">
    <location>
        <position position="495"/>
    </location>
    <ligand>
        <name>ATP</name>
        <dbReference type="ChEBI" id="CHEBI:30616"/>
    </ligand>
</feature>
<organism>
    <name type="scientific">Pseudothermotoga lettingae (strain ATCC BAA-301 / DSM 14385 / NBRC 107922 / TMO)</name>
    <name type="common">Thermotoga lettingae</name>
    <dbReference type="NCBI Taxonomy" id="416591"/>
    <lineage>
        <taxon>Bacteria</taxon>
        <taxon>Thermotogati</taxon>
        <taxon>Thermotogota</taxon>
        <taxon>Thermotogae</taxon>
        <taxon>Thermotogales</taxon>
        <taxon>Thermotogaceae</taxon>
        <taxon>Pseudothermotoga</taxon>
    </lineage>
</organism>
<dbReference type="EC" id="5.6.1.7" evidence="1"/>
<dbReference type="EMBL" id="CP000812">
    <property type="protein sequence ID" value="ABV32885.1"/>
    <property type="molecule type" value="Genomic_DNA"/>
</dbReference>
<dbReference type="RefSeq" id="WP_012002366.1">
    <property type="nucleotide sequence ID" value="NC_009828.1"/>
</dbReference>
<dbReference type="SMR" id="A8F401"/>
<dbReference type="STRING" id="416591.Tlet_0317"/>
<dbReference type="KEGG" id="tle:Tlet_0317"/>
<dbReference type="eggNOG" id="COG0459">
    <property type="taxonomic scope" value="Bacteria"/>
</dbReference>
<dbReference type="HOGENOM" id="CLU_016503_3_0_0"/>
<dbReference type="OrthoDB" id="9766614at2"/>
<dbReference type="Proteomes" id="UP000002016">
    <property type="component" value="Chromosome"/>
</dbReference>
<dbReference type="GO" id="GO:0005737">
    <property type="term" value="C:cytoplasm"/>
    <property type="evidence" value="ECO:0007669"/>
    <property type="project" value="UniProtKB-SubCell"/>
</dbReference>
<dbReference type="GO" id="GO:0005524">
    <property type="term" value="F:ATP binding"/>
    <property type="evidence" value="ECO:0007669"/>
    <property type="project" value="UniProtKB-UniRule"/>
</dbReference>
<dbReference type="GO" id="GO:0140662">
    <property type="term" value="F:ATP-dependent protein folding chaperone"/>
    <property type="evidence" value="ECO:0007669"/>
    <property type="project" value="InterPro"/>
</dbReference>
<dbReference type="GO" id="GO:0016853">
    <property type="term" value="F:isomerase activity"/>
    <property type="evidence" value="ECO:0007669"/>
    <property type="project" value="UniProtKB-KW"/>
</dbReference>
<dbReference type="GO" id="GO:0051082">
    <property type="term" value="F:unfolded protein binding"/>
    <property type="evidence" value="ECO:0007669"/>
    <property type="project" value="UniProtKB-UniRule"/>
</dbReference>
<dbReference type="GO" id="GO:0042026">
    <property type="term" value="P:protein refolding"/>
    <property type="evidence" value="ECO:0007669"/>
    <property type="project" value="UniProtKB-UniRule"/>
</dbReference>
<dbReference type="CDD" id="cd03344">
    <property type="entry name" value="GroEL"/>
    <property type="match status" value="1"/>
</dbReference>
<dbReference type="FunFam" id="3.50.7.10:FF:000001">
    <property type="entry name" value="60 kDa chaperonin"/>
    <property type="match status" value="1"/>
</dbReference>
<dbReference type="Gene3D" id="3.50.7.10">
    <property type="entry name" value="GroEL"/>
    <property type="match status" value="1"/>
</dbReference>
<dbReference type="Gene3D" id="1.10.560.10">
    <property type="entry name" value="GroEL-like equatorial domain"/>
    <property type="match status" value="1"/>
</dbReference>
<dbReference type="Gene3D" id="3.30.260.10">
    <property type="entry name" value="TCP-1-like chaperonin intermediate domain"/>
    <property type="match status" value="1"/>
</dbReference>
<dbReference type="HAMAP" id="MF_00600">
    <property type="entry name" value="CH60"/>
    <property type="match status" value="1"/>
</dbReference>
<dbReference type="InterPro" id="IPR018370">
    <property type="entry name" value="Chaperonin_Cpn60_CS"/>
</dbReference>
<dbReference type="InterPro" id="IPR001844">
    <property type="entry name" value="Cpn60/GroEL"/>
</dbReference>
<dbReference type="InterPro" id="IPR002423">
    <property type="entry name" value="Cpn60/GroEL/TCP-1"/>
</dbReference>
<dbReference type="InterPro" id="IPR027409">
    <property type="entry name" value="GroEL-like_apical_dom_sf"/>
</dbReference>
<dbReference type="InterPro" id="IPR027413">
    <property type="entry name" value="GROEL-like_equatorial_sf"/>
</dbReference>
<dbReference type="InterPro" id="IPR027410">
    <property type="entry name" value="TCP-1-like_intermed_sf"/>
</dbReference>
<dbReference type="NCBIfam" id="TIGR02348">
    <property type="entry name" value="GroEL"/>
    <property type="match status" value="1"/>
</dbReference>
<dbReference type="NCBIfam" id="NF000592">
    <property type="entry name" value="PRK00013.1"/>
    <property type="match status" value="1"/>
</dbReference>
<dbReference type="NCBIfam" id="NF009487">
    <property type="entry name" value="PRK12849.1"/>
    <property type="match status" value="1"/>
</dbReference>
<dbReference type="NCBIfam" id="NF009488">
    <property type="entry name" value="PRK12850.1"/>
    <property type="match status" value="1"/>
</dbReference>
<dbReference type="NCBIfam" id="NF009489">
    <property type="entry name" value="PRK12851.1"/>
    <property type="match status" value="1"/>
</dbReference>
<dbReference type="PANTHER" id="PTHR45633">
    <property type="entry name" value="60 KDA HEAT SHOCK PROTEIN, MITOCHONDRIAL"/>
    <property type="match status" value="1"/>
</dbReference>
<dbReference type="Pfam" id="PF00118">
    <property type="entry name" value="Cpn60_TCP1"/>
    <property type="match status" value="1"/>
</dbReference>
<dbReference type="PRINTS" id="PR00298">
    <property type="entry name" value="CHAPERONIN60"/>
</dbReference>
<dbReference type="SUPFAM" id="SSF52029">
    <property type="entry name" value="GroEL apical domain-like"/>
    <property type="match status" value="1"/>
</dbReference>
<dbReference type="SUPFAM" id="SSF48592">
    <property type="entry name" value="GroEL equatorial domain-like"/>
    <property type="match status" value="1"/>
</dbReference>
<dbReference type="SUPFAM" id="SSF54849">
    <property type="entry name" value="GroEL-intermediate domain like"/>
    <property type="match status" value="1"/>
</dbReference>
<dbReference type="PROSITE" id="PS00296">
    <property type="entry name" value="CHAPERONINS_CPN60"/>
    <property type="match status" value="1"/>
</dbReference>
<proteinExistence type="inferred from homology"/>
<name>CH60_PSELT</name>
<gene>
    <name evidence="1" type="primary">groEL</name>
    <name evidence="1" type="synonym">groL</name>
    <name type="ordered locus">Tlet_0317</name>
</gene>
<reference key="1">
    <citation type="submission" date="2007-08" db="EMBL/GenBank/DDBJ databases">
        <title>Complete sequence of Thermotoga lettingae TMO.</title>
        <authorList>
            <consortium name="US DOE Joint Genome Institute"/>
            <person name="Copeland A."/>
            <person name="Lucas S."/>
            <person name="Lapidus A."/>
            <person name="Barry K."/>
            <person name="Glavina del Rio T."/>
            <person name="Dalin E."/>
            <person name="Tice H."/>
            <person name="Pitluck S."/>
            <person name="Foster B."/>
            <person name="Bruce D."/>
            <person name="Schmutz J."/>
            <person name="Larimer F."/>
            <person name="Land M."/>
            <person name="Hauser L."/>
            <person name="Kyrpides N."/>
            <person name="Mikhailova N."/>
            <person name="Nelson K."/>
            <person name="Gogarten J.P."/>
            <person name="Noll K."/>
            <person name="Richardson P."/>
        </authorList>
    </citation>
    <scope>NUCLEOTIDE SEQUENCE [LARGE SCALE GENOMIC DNA]</scope>
    <source>
        <strain>ATCC BAA-301 / DSM 14385 / NBRC 107922 / TMO</strain>
    </source>
</reference>
<accession>A8F401</accession>
<keyword id="KW-0067">ATP-binding</keyword>
<keyword id="KW-0143">Chaperone</keyword>
<keyword id="KW-0963">Cytoplasm</keyword>
<keyword id="KW-0413">Isomerase</keyword>
<keyword id="KW-0547">Nucleotide-binding</keyword>
<keyword id="KW-1185">Reference proteome</keyword>
<protein>
    <recommendedName>
        <fullName evidence="1">Chaperonin GroEL</fullName>
        <ecNumber evidence="1">5.6.1.7</ecNumber>
    </recommendedName>
    <alternativeName>
        <fullName evidence="1">60 kDa chaperonin</fullName>
    </alternativeName>
    <alternativeName>
        <fullName evidence="1">Chaperonin-60</fullName>
        <shortName evidence="1">Cpn60</shortName>
    </alternativeName>
</protein>
<comment type="function">
    <text evidence="1">Together with its co-chaperonin GroES, plays an essential role in assisting protein folding. The GroEL-GroES system forms a nano-cage that allows encapsulation of the non-native substrate proteins and provides a physical environment optimized to promote and accelerate protein folding.</text>
</comment>
<comment type="catalytic activity">
    <reaction evidence="1">
        <text>ATP + H2O + a folded polypeptide = ADP + phosphate + an unfolded polypeptide.</text>
        <dbReference type="EC" id="5.6.1.7"/>
    </reaction>
</comment>
<comment type="subunit">
    <text evidence="1">Forms a cylinder of 14 subunits composed of two heptameric rings stacked back-to-back. Interacts with the co-chaperonin GroES.</text>
</comment>
<comment type="subcellular location">
    <subcellularLocation>
        <location evidence="1">Cytoplasm</location>
    </subcellularLocation>
</comment>
<comment type="similarity">
    <text evidence="1">Belongs to the chaperonin (HSP60) family.</text>
</comment>
<evidence type="ECO:0000255" key="1">
    <source>
        <dbReference type="HAMAP-Rule" id="MF_00600"/>
    </source>
</evidence>